<comment type="function">
    <text evidence="1">Methylates ribosomal protein L11.</text>
</comment>
<comment type="catalytic activity">
    <reaction evidence="1">
        <text>L-lysyl-[protein] + 3 S-adenosyl-L-methionine = N(6),N(6),N(6)-trimethyl-L-lysyl-[protein] + 3 S-adenosyl-L-homocysteine + 3 H(+)</text>
        <dbReference type="Rhea" id="RHEA:54192"/>
        <dbReference type="Rhea" id="RHEA-COMP:9752"/>
        <dbReference type="Rhea" id="RHEA-COMP:13826"/>
        <dbReference type="ChEBI" id="CHEBI:15378"/>
        <dbReference type="ChEBI" id="CHEBI:29969"/>
        <dbReference type="ChEBI" id="CHEBI:57856"/>
        <dbReference type="ChEBI" id="CHEBI:59789"/>
        <dbReference type="ChEBI" id="CHEBI:61961"/>
    </reaction>
</comment>
<comment type="subcellular location">
    <subcellularLocation>
        <location evidence="1">Cytoplasm</location>
    </subcellularLocation>
</comment>
<comment type="similarity">
    <text evidence="1">Belongs to the methyltransferase superfamily. PrmA family.</text>
</comment>
<proteinExistence type="inferred from homology"/>
<name>PRMA_STAA3</name>
<protein>
    <recommendedName>
        <fullName evidence="1">Ribosomal protein L11 methyltransferase</fullName>
        <shortName evidence="1">L11 Mtase</shortName>
        <ecNumber evidence="1">2.1.1.-</ecNumber>
    </recommendedName>
</protein>
<reference key="1">
    <citation type="journal article" date="2006" name="Lancet">
        <title>Complete genome sequence of USA300, an epidemic clone of community-acquired meticillin-resistant Staphylococcus aureus.</title>
        <authorList>
            <person name="Diep B.A."/>
            <person name="Gill S.R."/>
            <person name="Chang R.F."/>
            <person name="Phan T.H."/>
            <person name="Chen J.H."/>
            <person name="Davidson M.G."/>
            <person name="Lin F."/>
            <person name="Lin J."/>
            <person name="Carleton H.A."/>
            <person name="Mongodin E.F."/>
            <person name="Sensabaugh G.F."/>
            <person name="Perdreau-Remington F."/>
        </authorList>
    </citation>
    <scope>NUCLEOTIDE SEQUENCE [LARGE SCALE GENOMIC DNA]</scope>
    <source>
        <strain>USA300</strain>
    </source>
</reference>
<accession>Q2FGE5</accession>
<dbReference type="EC" id="2.1.1.-" evidence="1"/>
<dbReference type="EMBL" id="CP000255">
    <property type="protein sequence ID" value="ABD21324.1"/>
    <property type="molecule type" value="Genomic_DNA"/>
</dbReference>
<dbReference type="RefSeq" id="WP_001104611.1">
    <property type="nucleotide sequence ID" value="NZ_CP027476.1"/>
</dbReference>
<dbReference type="SMR" id="Q2FGE5"/>
<dbReference type="KEGG" id="saa:SAUSA300_1538"/>
<dbReference type="HOGENOM" id="CLU_049382_0_1_9"/>
<dbReference type="OMA" id="MYYEFFF"/>
<dbReference type="Proteomes" id="UP000001939">
    <property type="component" value="Chromosome"/>
</dbReference>
<dbReference type="GO" id="GO:0005737">
    <property type="term" value="C:cytoplasm"/>
    <property type="evidence" value="ECO:0007669"/>
    <property type="project" value="UniProtKB-SubCell"/>
</dbReference>
<dbReference type="GO" id="GO:0016279">
    <property type="term" value="F:protein-lysine N-methyltransferase activity"/>
    <property type="evidence" value="ECO:0007669"/>
    <property type="project" value="RHEA"/>
</dbReference>
<dbReference type="GO" id="GO:0032259">
    <property type="term" value="P:methylation"/>
    <property type="evidence" value="ECO:0007669"/>
    <property type="project" value="UniProtKB-KW"/>
</dbReference>
<dbReference type="CDD" id="cd02440">
    <property type="entry name" value="AdoMet_MTases"/>
    <property type="match status" value="1"/>
</dbReference>
<dbReference type="Gene3D" id="3.40.50.150">
    <property type="entry name" value="Vaccinia Virus protein VP39"/>
    <property type="match status" value="1"/>
</dbReference>
<dbReference type="HAMAP" id="MF_00735">
    <property type="entry name" value="Methyltr_PrmA"/>
    <property type="match status" value="1"/>
</dbReference>
<dbReference type="InterPro" id="IPR050078">
    <property type="entry name" value="Ribosomal_L11_MeTrfase_PrmA"/>
</dbReference>
<dbReference type="InterPro" id="IPR004498">
    <property type="entry name" value="Ribosomal_PrmA_MeTrfase"/>
</dbReference>
<dbReference type="InterPro" id="IPR029063">
    <property type="entry name" value="SAM-dependent_MTases_sf"/>
</dbReference>
<dbReference type="NCBIfam" id="TIGR00406">
    <property type="entry name" value="prmA"/>
    <property type="match status" value="1"/>
</dbReference>
<dbReference type="PANTHER" id="PTHR43648">
    <property type="entry name" value="ELECTRON TRANSFER FLAVOPROTEIN BETA SUBUNIT LYSINE METHYLTRANSFERASE"/>
    <property type="match status" value="1"/>
</dbReference>
<dbReference type="PANTHER" id="PTHR43648:SF1">
    <property type="entry name" value="ELECTRON TRANSFER FLAVOPROTEIN BETA SUBUNIT LYSINE METHYLTRANSFERASE"/>
    <property type="match status" value="1"/>
</dbReference>
<dbReference type="Pfam" id="PF06325">
    <property type="entry name" value="PrmA"/>
    <property type="match status" value="1"/>
</dbReference>
<dbReference type="PIRSF" id="PIRSF000401">
    <property type="entry name" value="RPL11_MTase"/>
    <property type="match status" value="1"/>
</dbReference>
<dbReference type="SUPFAM" id="SSF53335">
    <property type="entry name" value="S-adenosyl-L-methionine-dependent methyltransferases"/>
    <property type="match status" value="1"/>
</dbReference>
<gene>
    <name evidence="1" type="primary">prmA</name>
    <name type="ordered locus">SAUSA300_1538</name>
</gene>
<sequence>MNWTELSIIINHEAVELATNILENHGSNGVVIEDSDDLINQPEDKYGEIYALKKEDYPDKGVRLKAYFNEMTYDDKLRQQIKDELLNLDELDQHNVQFSEQIIAETDWENEWKNYFHPFRASKKFTIVPSWETYAKEADEELCIELDPGMAFGTGDHPTTSMCLKAIETYVLPQHSVIDVGTGSGILSIASHLIGVKRIKALDIDEMAVSVAKENFRRNHCETLIEAVPGNLLKDETEKFDIVIANILAHIIDEMIEDAYNTLNEGGYFITSGIIKEKYEGIQSHMERVGFKIISEQHDNGWVCLVGQKVSE</sequence>
<evidence type="ECO:0000255" key="1">
    <source>
        <dbReference type="HAMAP-Rule" id="MF_00735"/>
    </source>
</evidence>
<organism>
    <name type="scientific">Staphylococcus aureus (strain USA300)</name>
    <dbReference type="NCBI Taxonomy" id="367830"/>
    <lineage>
        <taxon>Bacteria</taxon>
        <taxon>Bacillati</taxon>
        <taxon>Bacillota</taxon>
        <taxon>Bacilli</taxon>
        <taxon>Bacillales</taxon>
        <taxon>Staphylococcaceae</taxon>
        <taxon>Staphylococcus</taxon>
    </lineage>
</organism>
<keyword id="KW-0963">Cytoplasm</keyword>
<keyword id="KW-0489">Methyltransferase</keyword>
<keyword id="KW-0949">S-adenosyl-L-methionine</keyword>
<keyword id="KW-0808">Transferase</keyword>
<feature type="chain" id="PRO_1000046100" description="Ribosomal protein L11 methyltransferase">
    <location>
        <begin position="1"/>
        <end position="312"/>
    </location>
</feature>
<feature type="binding site" evidence="1">
    <location>
        <position position="160"/>
    </location>
    <ligand>
        <name>S-adenosyl-L-methionine</name>
        <dbReference type="ChEBI" id="CHEBI:59789"/>
    </ligand>
</feature>
<feature type="binding site" evidence="1">
    <location>
        <position position="181"/>
    </location>
    <ligand>
        <name>S-adenosyl-L-methionine</name>
        <dbReference type="ChEBI" id="CHEBI:59789"/>
    </ligand>
</feature>
<feature type="binding site" evidence="1">
    <location>
        <position position="203"/>
    </location>
    <ligand>
        <name>S-adenosyl-L-methionine</name>
        <dbReference type="ChEBI" id="CHEBI:59789"/>
    </ligand>
</feature>
<feature type="binding site" evidence="1">
    <location>
        <position position="246"/>
    </location>
    <ligand>
        <name>S-adenosyl-L-methionine</name>
        <dbReference type="ChEBI" id="CHEBI:59789"/>
    </ligand>
</feature>